<gene>
    <name evidence="1" type="primary">rny</name>
    <name type="ordered locus">GSU1137</name>
</gene>
<accession>Q74E27</accession>
<comment type="function">
    <text evidence="1">Endoribonuclease that initiates mRNA decay.</text>
</comment>
<comment type="subcellular location">
    <subcellularLocation>
        <location evidence="1">Cell membrane</location>
        <topology evidence="1">Single-pass membrane protein</topology>
    </subcellularLocation>
</comment>
<comment type="similarity">
    <text evidence="1">Belongs to the RNase Y family.</text>
</comment>
<reference key="1">
    <citation type="journal article" date="2003" name="Science">
        <title>Genome of Geobacter sulfurreducens: metal reduction in subsurface environments.</title>
        <authorList>
            <person name="Methe B.A."/>
            <person name="Nelson K.E."/>
            <person name="Eisen J.A."/>
            <person name="Paulsen I.T."/>
            <person name="Nelson W.C."/>
            <person name="Heidelberg J.F."/>
            <person name="Wu D."/>
            <person name="Wu M."/>
            <person name="Ward N.L."/>
            <person name="Beanan M.J."/>
            <person name="Dodson R.J."/>
            <person name="Madupu R."/>
            <person name="Brinkac L.M."/>
            <person name="Daugherty S.C."/>
            <person name="DeBoy R.T."/>
            <person name="Durkin A.S."/>
            <person name="Gwinn M.L."/>
            <person name="Kolonay J.F."/>
            <person name="Sullivan S.A."/>
            <person name="Haft D.H."/>
            <person name="Selengut J."/>
            <person name="Davidsen T.M."/>
            <person name="Zafar N."/>
            <person name="White O."/>
            <person name="Tran B."/>
            <person name="Romero C."/>
            <person name="Forberger H.A."/>
            <person name="Weidman J.F."/>
            <person name="Khouri H.M."/>
            <person name="Feldblyum T.V."/>
            <person name="Utterback T.R."/>
            <person name="Van Aken S.E."/>
            <person name="Lovley D.R."/>
            <person name="Fraser C.M."/>
        </authorList>
    </citation>
    <scope>NUCLEOTIDE SEQUENCE [LARGE SCALE GENOMIC DNA]</scope>
    <source>
        <strain>ATCC 51573 / DSM 12127 / PCA</strain>
    </source>
</reference>
<protein>
    <recommendedName>
        <fullName evidence="1">Ribonuclease Y</fullName>
        <shortName evidence="1">RNase Y</shortName>
        <ecNumber evidence="1">3.1.-.-</ecNumber>
    </recommendedName>
</protein>
<feature type="chain" id="PRO_0000344882" description="Ribonuclease Y">
    <location>
        <begin position="1"/>
        <end position="520"/>
    </location>
</feature>
<feature type="transmembrane region" description="Helical" evidence="1">
    <location>
        <begin position="3"/>
        <end position="23"/>
    </location>
</feature>
<feature type="domain" description="KH" evidence="1">
    <location>
        <begin position="210"/>
        <end position="273"/>
    </location>
</feature>
<feature type="domain" description="HD" evidence="2">
    <location>
        <begin position="336"/>
        <end position="429"/>
    </location>
</feature>
<proteinExistence type="inferred from homology"/>
<evidence type="ECO:0000255" key="1">
    <source>
        <dbReference type="HAMAP-Rule" id="MF_00335"/>
    </source>
</evidence>
<evidence type="ECO:0000255" key="2">
    <source>
        <dbReference type="PROSITE-ProRule" id="PRU01175"/>
    </source>
</evidence>
<sequence>MKIELAIIFIVLAAGAGFLIGNLLRKKLSDSLVSKAEELASRIVEDAKREAETISKEAALQAKDVVYQAKADFEREAKEKHKDLQTLEKRLQQKEENLDKKMNLFDQRDADLTKKEQGILAREQSLNRKEESLDALVAEQRAKLEQISGMSSAEAKKILMDAMESEAKLDAAKRIKAIEEEARETADKKSKEIISLAVQRYAGEYVAEKTVSVVALPSDEMKGRIIGREGRNIRALEAATGIDLIIDDTPEAVILSGFNPVRREVAKIALEKLITDGRIHPGRIEEVVAKAEEEVEQAVKEAGDQAAFDLGVHGIHPEILKLIGRLKYRTSYSQNVYQHSLEVAFLCGIMASELGINVKQAKRAGLLHDLGKAVDHEVEGSHAVIGAELARKYGESPKIVHAIMAHHEDEKPNSILAVLVQAADALSGARPGARREMMETYVKRLEDLERISCSFGGVNNSFAIQAGREIRVMVSSEEVSDERAVLLAKDIAKKIEAEMTYPGQIKVNVIRETRAIEYAR</sequence>
<organism>
    <name type="scientific">Geobacter sulfurreducens (strain ATCC 51573 / DSM 12127 / PCA)</name>
    <dbReference type="NCBI Taxonomy" id="243231"/>
    <lineage>
        <taxon>Bacteria</taxon>
        <taxon>Pseudomonadati</taxon>
        <taxon>Thermodesulfobacteriota</taxon>
        <taxon>Desulfuromonadia</taxon>
        <taxon>Geobacterales</taxon>
        <taxon>Geobacteraceae</taxon>
        <taxon>Geobacter</taxon>
    </lineage>
</organism>
<name>RNY_GEOSL</name>
<dbReference type="EC" id="3.1.-.-" evidence="1"/>
<dbReference type="EMBL" id="AE017180">
    <property type="protein sequence ID" value="AAR34513.1"/>
    <property type="molecule type" value="Genomic_DNA"/>
</dbReference>
<dbReference type="RefSeq" id="NP_952190.1">
    <property type="nucleotide sequence ID" value="NC_002939.5"/>
</dbReference>
<dbReference type="RefSeq" id="WP_010941798.1">
    <property type="nucleotide sequence ID" value="NC_002939.5"/>
</dbReference>
<dbReference type="SMR" id="Q74E27"/>
<dbReference type="STRING" id="243231.GSU1137"/>
<dbReference type="DNASU" id="2685899"/>
<dbReference type="EnsemblBacteria" id="AAR34513">
    <property type="protein sequence ID" value="AAR34513"/>
    <property type="gene ID" value="GSU1137"/>
</dbReference>
<dbReference type="KEGG" id="gsu:GSU1137"/>
<dbReference type="PATRIC" id="fig|243231.5.peg.1132"/>
<dbReference type="eggNOG" id="COG1418">
    <property type="taxonomic scope" value="Bacteria"/>
</dbReference>
<dbReference type="HOGENOM" id="CLU_028328_1_0_7"/>
<dbReference type="InParanoid" id="Q74E27"/>
<dbReference type="OrthoDB" id="9803205at2"/>
<dbReference type="Proteomes" id="UP000000577">
    <property type="component" value="Chromosome"/>
</dbReference>
<dbReference type="GO" id="GO:0005886">
    <property type="term" value="C:plasma membrane"/>
    <property type="evidence" value="ECO:0007669"/>
    <property type="project" value="UniProtKB-SubCell"/>
</dbReference>
<dbReference type="GO" id="GO:0003723">
    <property type="term" value="F:RNA binding"/>
    <property type="evidence" value="ECO:0007669"/>
    <property type="project" value="UniProtKB-UniRule"/>
</dbReference>
<dbReference type="GO" id="GO:0004521">
    <property type="term" value="F:RNA endonuclease activity"/>
    <property type="evidence" value="ECO:0007669"/>
    <property type="project" value="UniProtKB-UniRule"/>
</dbReference>
<dbReference type="GO" id="GO:0006402">
    <property type="term" value="P:mRNA catabolic process"/>
    <property type="evidence" value="ECO:0007669"/>
    <property type="project" value="UniProtKB-UniRule"/>
</dbReference>
<dbReference type="CDD" id="cd00077">
    <property type="entry name" value="HDc"/>
    <property type="match status" value="1"/>
</dbReference>
<dbReference type="CDD" id="cd22431">
    <property type="entry name" value="KH-I_RNaseY"/>
    <property type="match status" value="1"/>
</dbReference>
<dbReference type="FunFam" id="1.10.3210.10:FF:000022">
    <property type="entry name" value="Ribonuclease Y"/>
    <property type="match status" value="1"/>
</dbReference>
<dbReference type="Gene3D" id="1.10.3210.10">
    <property type="entry name" value="Hypothetical protein af1432"/>
    <property type="match status" value="1"/>
</dbReference>
<dbReference type="Gene3D" id="3.30.1370.10">
    <property type="entry name" value="K Homology domain, type 1"/>
    <property type="match status" value="1"/>
</dbReference>
<dbReference type="HAMAP" id="MF_00335">
    <property type="entry name" value="RNase_Y"/>
    <property type="match status" value="1"/>
</dbReference>
<dbReference type="InterPro" id="IPR003607">
    <property type="entry name" value="HD/PDEase_dom"/>
</dbReference>
<dbReference type="InterPro" id="IPR006674">
    <property type="entry name" value="HD_domain"/>
</dbReference>
<dbReference type="InterPro" id="IPR006675">
    <property type="entry name" value="HDIG_dom"/>
</dbReference>
<dbReference type="InterPro" id="IPR004087">
    <property type="entry name" value="KH_dom"/>
</dbReference>
<dbReference type="InterPro" id="IPR004088">
    <property type="entry name" value="KH_dom_type_1"/>
</dbReference>
<dbReference type="InterPro" id="IPR036612">
    <property type="entry name" value="KH_dom_type_1_sf"/>
</dbReference>
<dbReference type="InterPro" id="IPR017705">
    <property type="entry name" value="Ribonuclease_Y"/>
</dbReference>
<dbReference type="InterPro" id="IPR022711">
    <property type="entry name" value="RNase_Y_N"/>
</dbReference>
<dbReference type="NCBIfam" id="TIGR00277">
    <property type="entry name" value="HDIG"/>
    <property type="match status" value="1"/>
</dbReference>
<dbReference type="NCBIfam" id="TIGR03319">
    <property type="entry name" value="RNase_Y"/>
    <property type="match status" value="1"/>
</dbReference>
<dbReference type="PANTHER" id="PTHR12826">
    <property type="entry name" value="RIBONUCLEASE Y"/>
    <property type="match status" value="1"/>
</dbReference>
<dbReference type="PANTHER" id="PTHR12826:SF15">
    <property type="entry name" value="RIBONUCLEASE Y"/>
    <property type="match status" value="1"/>
</dbReference>
<dbReference type="Pfam" id="PF01966">
    <property type="entry name" value="HD"/>
    <property type="match status" value="1"/>
</dbReference>
<dbReference type="Pfam" id="PF00013">
    <property type="entry name" value="KH_1"/>
    <property type="match status" value="1"/>
</dbReference>
<dbReference type="Pfam" id="PF12072">
    <property type="entry name" value="RNase_Y_N"/>
    <property type="match status" value="1"/>
</dbReference>
<dbReference type="SMART" id="SM00471">
    <property type="entry name" value="HDc"/>
    <property type="match status" value="1"/>
</dbReference>
<dbReference type="SMART" id="SM00322">
    <property type="entry name" value="KH"/>
    <property type="match status" value="1"/>
</dbReference>
<dbReference type="SUPFAM" id="SSF54791">
    <property type="entry name" value="Eukaryotic type KH-domain (KH-domain type I)"/>
    <property type="match status" value="1"/>
</dbReference>
<dbReference type="SUPFAM" id="SSF109604">
    <property type="entry name" value="HD-domain/PDEase-like"/>
    <property type="match status" value="1"/>
</dbReference>
<dbReference type="PROSITE" id="PS51831">
    <property type="entry name" value="HD"/>
    <property type="match status" value="1"/>
</dbReference>
<dbReference type="PROSITE" id="PS50084">
    <property type="entry name" value="KH_TYPE_1"/>
    <property type="match status" value="1"/>
</dbReference>
<keyword id="KW-1003">Cell membrane</keyword>
<keyword id="KW-0255">Endonuclease</keyword>
<keyword id="KW-0378">Hydrolase</keyword>
<keyword id="KW-0472">Membrane</keyword>
<keyword id="KW-0540">Nuclease</keyword>
<keyword id="KW-1185">Reference proteome</keyword>
<keyword id="KW-0694">RNA-binding</keyword>
<keyword id="KW-0812">Transmembrane</keyword>
<keyword id="KW-1133">Transmembrane helix</keyword>